<accession>A8YXL4</accession>
<reference key="1">
    <citation type="journal article" date="2008" name="J. Bacteriol.">
        <title>Genome sequence of Lactobacillus helveticus: an organism distinguished by selective gene loss and IS element expansion.</title>
        <authorList>
            <person name="Callanan M."/>
            <person name="Kaleta P."/>
            <person name="O'Callaghan J."/>
            <person name="O'Sullivan O."/>
            <person name="Jordan K."/>
            <person name="McAuliffe O."/>
            <person name="Sangrador-Vegas A."/>
            <person name="Slattery L."/>
            <person name="Fitzgerald G.F."/>
            <person name="Beresford T."/>
            <person name="Ross R.P."/>
        </authorList>
    </citation>
    <scope>NUCLEOTIDE SEQUENCE [LARGE SCALE GENOMIC DNA]</scope>
    <source>
        <strain>DPC 4571</strain>
    </source>
</reference>
<protein>
    <recommendedName>
        <fullName evidence="1">Small ribosomal subunit protein uS17</fullName>
    </recommendedName>
    <alternativeName>
        <fullName evidence="2">30S ribosomal protein S17</fullName>
    </alternativeName>
</protein>
<evidence type="ECO:0000255" key="1">
    <source>
        <dbReference type="HAMAP-Rule" id="MF_01345"/>
    </source>
</evidence>
<evidence type="ECO:0000305" key="2"/>
<proteinExistence type="inferred from homology"/>
<feature type="chain" id="PRO_1000073344" description="Small ribosomal subunit protein uS17">
    <location>
        <begin position="1"/>
        <end position="88"/>
    </location>
</feature>
<sequence>MSETNERNRRHVYQGRVVSDKMDKTIVVVVDTYKNHPVYSKRIRYSKKYYAQDENNEAKVGDTVRIMETRPLSRKKRFRLVKIVKKSV</sequence>
<dbReference type="EMBL" id="CP000517">
    <property type="protein sequence ID" value="ABX26545.1"/>
    <property type="molecule type" value="Genomic_DNA"/>
</dbReference>
<dbReference type="RefSeq" id="WP_003631302.1">
    <property type="nucleotide sequence ID" value="NC_010080.1"/>
</dbReference>
<dbReference type="SMR" id="A8YXL4"/>
<dbReference type="KEGG" id="lhe:lhv_0321"/>
<dbReference type="eggNOG" id="COG0186">
    <property type="taxonomic scope" value="Bacteria"/>
</dbReference>
<dbReference type="HOGENOM" id="CLU_073626_1_0_9"/>
<dbReference type="Proteomes" id="UP000000790">
    <property type="component" value="Chromosome"/>
</dbReference>
<dbReference type="GO" id="GO:0022627">
    <property type="term" value="C:cytosolic small ribosomal subunit"/>
    <property type="evidence" value="ECO:0007669"/>
    <property type="project" value="TreeGrafter"/>
</dbReference>
<dbReference type="GO" id="GO:0019843">
    <property type="term" value="F:rRNA binding"/>
    <property type="evidence" value="ECO:0007669"/>
    <property type="project" value="UniProtKB-UniRule"/>
</dbReference>
<dbReference type="GO" id="GO:0003735">
    <property type="term" value="F:structural constituent of ribosome"/>
    <property type="evidence" value="ECO:0007669"/>
    <property type="project" value="InterPro"/>
</dbReference>
<dbReference type="GO" id="GO:0006412">
    <property type="term" value="P:translation"/>
    <property type="evidence" value="ECO:0007669"/>
    <property type="project" value="UniProtKB-UniRule"/>
</dbReference>
<dbReference type="CDD" id="cd00364">
    <property type="entry name" value="Ribosomal_uS17"/>
    <property type="match status" value="1"/>
</dbReference>
<dbReference type="Gene3D" id="2.40.50.140">
    <property type="entry name" value="Nucleic acid-binding proteins"/>
    <property type="match status" value="1"/>
</dbReference>
<dbReference type="HAMAP" id="MF_01345_B">
    <property type="entry name" value="Ribosomal_uS17_B"/>
    <property type="match status" value="1"/>
</dbReference>
<dbReference type="InterPro" id="IPR012340">
    <property type="entry name" value="NA-bd_OB-fold"/>
</dbReference>
<dbReference type="InterPro" id="IPR000266">
    <property type="entry name" value="Ribosomal_uS17"/>
</dbReference>
<dbReference type="InterPro" id="IPR019984">
    <property type="entry name" value="Ribosomal_uS17_bact/chlr"/>
</dbReference>
<dbReference type="InterPro" id="IPR019979">
    <property type="entry name" value="Ribosomal_uS17_CS"/>
</dbReference>
<dbReference type="NCBIfam" id="NF004123">
    <property type="entry name" value="PRK05610.1"/>
    <property type="match status" value="1"/>
</dbReference>
<dbReference type="NCBIfam" id="TIGR03635">
    <property type="entry name" value="uS17_bact"/>
    <property type="match status" value="1"/>
</dbReference>
<dbReference type="PANTHER" id="PTHR10744">
    <property type="entry name" value="40S RIBOSOMAL PROTEIN S11 FAMILY MEMBER"/>
    <property type="match status" value="1"/>
</dbReference>
<dbReference type="PANTHER" id="PTHR10744:SF1">
    <property type="entry name" value="SMALL RIBOSOMAL SUBUNIT PROTEIN US17M"/>
    <property type="match status" value="1"/>
</dbReference>
<dbReference type="Pfam" id="PF00366">
    <property type="entry name" value="Ribosomal_S17"/>
    <property type="match status" value="1"/>
</dbReference>
<dbReference type="PRINTS" id="PR00973">
    <property type="entry name" value="RIBOSOMALS17"/>
</dbReference>
<dbReference type="SUPFAM" id="SSF50249">
    <property type="entry name" value="Nucleic acid-binding proteins"/>
    <property type="match status" value="1"/>
</dbReference>
<dbReference type="PROSITE" id="PS00056">
    <property type="entry name" value="RIBOSOMAL_S17"/>
    <property type="match status" value="1"/>
</dbReference>
<name>RS17_LACH4</name>
<organism>
    <name type="scientific">Lactobacillus helveticus (strain DPC 4571)</name>
    <dbReference type="NCBI Taxonomy" id="405566"/>
    <lineage>
        <taxon>Bacteria</taxon>
        <taxon>Bacillati</taxon>
        <taxon>Bacillota</taxon>
        <taxon>Bacilli</taxon>
        <taxon>Lactobacillales</taxon>
        <taxon>Lactobacillaceae</taxon>
        <taxon>Lactobacillus</taxon>
    </lineage>
</organism>
<keyword id="KW-0687">Ribonucleoprotein</keyword>
<keyword id="KW-0689">Ribosomal protein</keyword>
<keyword id="KW-0694">RNA-binding</keyword>
<keyword id="KW-0699">rRNA-binding</keyword>
<gene>
    <name evidence="1" type="primary">rpsQ</name>
    <name type="ordered locus">lhv_0321</name>
</gene>
<comment type="function">
    <text evidence="1">One of the primary rRNA binding proteins, it binds specifically to the 5'-end of 16S ribosomal RNA.</text>
</comment>
<comment type="subunit">
    <text evidence="1">Part of the 30S ribosomal subunit.</text>
</comment>
<comment type="similarity">
    <text evidence="1">Belongs to the universal ribosomal protein uS17 family.</text>
</comment>